<organism>
    <name type="scientific">Pseudotsuga menziesii</name>
    <name type="common">Douglas-fir</name>
    <name type="synonym">Abies menziesii</name>
    <dbReference type="NCBI Taxonomy" id="3357"/>
    <lineage>
        <taxon>Eukaryota</taxon>
        <taxon>Viridiplantae</taxon>
        <taxon>Streptophyta</taxon>
        <taxon>Embryophyta</taxon>
        <taxon>Tracheophyta</taxon>
        <taxon>Spermatophyta</taxon>
        <taxon>Pinopsida</taxon>
        <taxon>Pinidae</taxon>
        <taxon>Conifers I</taxon>
        <taxon>Pinales</taxon>
        <taxon>Pinaceae</taxon>
        <taxon>Pseudotsuga</taxon>
    </lineage>
</organism>
<evidence type="ECO:0000303" key="1">
    <source>
    </source>
</evidence>
<feature type="chain" id="PRO_0000347306" description="Unknown protein 19">
    <location>
        <begin position="1" status="less than"/>
        <end position="9" status="greater than"/>
    </location>
</feature>
<feature type="non-terminal residue" evidence="1">
    <location>
        <position position="1"/>
    </location>
</feature>
<feature type="non-terminal residue" evidence="1">
    <location>
        <position position="9"/>
    </location>
</feature>
<sequence>RATVNGLPA</sequence>
<protein>
    <recommendedName>
        <fullName>Unknown protein 19</fullName>
    </recommendedName>
</protein>
<name>UP19_PSEMZ</name>
<proteinExistence type="evidence at protein level"/>
<accession>P85927</accession>
<reference key="1">
    <citation type="journal article" date="2008" name="J. Proteomics">
        <title>A proteomics approach to identify proteins differentially expressed in Douglas-fir seedlings infected by Phellinus sulphurascens.</title>
        <authorList>
            <person name="Islam M.A."/>
            <person name="Sturrock R.N."/>
            <person name="Ekramoddoullah A.K.M."/>
        </authorList>
    </citation>
    <scope>IDENTIFICATION BY MASS SPECTROMETRY</scope>
</reference>